<comment type="interaction">
    <interactant intactId="EBI-17841208">
        <id>Q7KYR7-4</id>
    </interactant>
    <interactant intactId="EBI-12256978">
        <id>Q8N6F1-2</id>
        <label>CLDN19</label>
    </interactant>
    <organismsDiffer>false</organismsDiffer>
    <experiments>3</experiments>
</comment>
<comment type="interaction">
    <interactant intactId="EBI-17841208">
        <id>Q7KYR7-4</id>
    </interactant>
    <interactant intactId="EBI-12019274">
        <id>Q4LDR2</id>
        <label>CTXN3</label>
    </interactant>
    <organismsDiffer>false</organismsDiffer>
    <experiments>3</experiments>
</comment>
<comment type="interaction">
    <interactant intactId="EBI-17841208">
        <id>Q7KYR7-4</id>
    </interactant>
    <interactant intactId="EBI-3932027">
        <id>P21145</id>
        <label>MAL</label>
    </interactant>
    <organismsDiffer>false</organismsDiffer>
    <experiments>3</experiments>
</comment>
<comment type="interaction">
    <interactant intactId="EBI-17841208">
        <id>Q7KYR7-4</id>
    </interactant>
    <interactant intactId="EBI-6380741">
        <id>P42857</id>
        <label>NSG1</label>
    </interactant>
    <organismsDiffer>false</organismsDiffer>
    <experiments>3</experiments>
</comment>
<comment type="interaction">
    <interactant intactId="EBI-17841208">
        <id>Q7KYR7-4</id>
    </interactant>
    <interactant intactId="EBI-11721828">
        <id>Q8IY26</id>
        <label>PLPP6</label>
    </interactant>
    <organismsDiffer>false</organismsDiffer>
    <experiments>3</experiments>
</comment>
<comment type="interaction">
    <interactant intactId="EBI-17841208">
        <id>Q7KYR7-4</id>
    </interactant>
    <interactant intactId="EBI-12200293">
        <id>P0DN84</id>
        <label>STRIT1</label>
    </interactant>
    <organismsDiffer>false</organismsDiffer>
    <experiments>3</experiments>
</comment>
<comment type="subcellular location">
    <subcellularLocation>
        <location evidence="1">Membrane</location>
        <topology evidence="1">Single-pass type I membrane protein</topology>
    </subcellularLocation>
</comment>
<comment type="alternative products">
    <event type="alternative splicing"/>
    <isoform>
        <id>Q7KYR7-2</id>
        <name>1</name>
        <sequence type="displayed"/>
    </isoform>
    <isoform>
        <id>Q7KYR7-1</id>
        <name>2</name>
        <sequence type="described" ref="VSP_035843 VSP_035844"/>
    </isoform>
    <isoform>
        <id>Q7KYR7-3</id>
        <name>3</name>
        <sequence type="described" ref="VSP_012708"/>
    </isoform>
    <isoform>
        <id>Q7KYR7-4</id>
        <name>4</name>
        <sequence type="described" ref="VSP_043165 VSP_043166"/>
    </isoform>
    <isoform>
        <id>Q7KYR7-5</id>
        <name>5</name>
        <sequence type="described" ref="VSP_044249"/>
    </isoform>
    <isoform>
        <id>Q7KYR7-6</id>
        <name>6</name>
        <sequence type="described" ref="VSP_045005 VSP_045006"/>
    </isoform>
</comment>
<comment type="tissue specificity">
    <text evidence="6">Highly expressed in brain, bone marrow, small intestine, muscle, spleen and pancreas. Moderate expression was seen in lung, liver and kidney.</text>
</comment>
<comment type="similarity">
    <text evidence="12">Belongs to the immunoglobulin superfamily. BTN/MOG family.</text>
</comment>
<comment type="sequence caution" evidence="12">
    <conflict type="erroneous initiation">
        <sequence resource="EMBL-CDS" id="BAD93014"/>
    </conflict>
    <text>Extended N-terminus.</text>
</comment>
<evidence type="ECO:0000250" key="1"/>
<evidence type="ECO:0000255" key="2"/>
<evidence type="ECO:0000255" key="3">
    <source>
        <dbReference type="PROSITE-ProRule" id="PRU00114"/>
    </source>
</evidence>
<evidence type="ECO:0000255" key="4">
    <source>
        <dbReference type="PROSITE-ProRule" id="PRU00548"/>
    </source>
</evidence>
<evidence type="ECO:0000269" key="5">
    <source>
    </source>
</evidence>
<evidence type="ECO:0000269" key="6">
    <source>
    </source>
</evidence>
<evidence type="ECO:0000303" key="7">
    <source>
    </source>
</evidence>
<evidence type="ECO:0000303" key="8">
    <source>
    </source>
</evidence>
<evidence type="ECO:0000303" key="9">
    <source>
    </source>
</evidence>
<evidence type="ECO:0000303" key="10">
    <source>
    </source>
</evidence>
<evidence type="ECO:0000303" key="11">
    <source ref="5"/>
</evidence>
<evidence type="ECO:0000305" key="12"/>
<evidence type="ECO:0007829" key="13">
    <source>
        <dbReference type="PDB" id="8DFW"/>
    </source>
</evidence>
<evidence type="ECO:0007829" key="14">
    <source>
        <dbReference type="PDB" id="8JYE"/>
    </source>
</evidence>
<sequence length="527" mass="59633">MESAAALHFSRPASLLLLLLSLCALVSAQFIVVGPTDPILATVGENTTLRCHLSPEKNAEDMEVRWFRSQFSPAVFVYKGGRERTEEQMEEYRGRTTFVSKDISRGSVALVIHNITAQENGTYRCYFQEGRSYDEAILHLVVAGLGSKPLISMRGHEDGGIRLECISRGWYPKPLTVWRDPYGGVAPALKEVSMPDADGLFMVTTAVIIRDKSVRNMSCSINNTLLGQKKESVIFIPESFMPSVSPCAVALPIIVVILMIPIAVCIYWINKLQKEKKILSGEKEFERETREIALKELEKERVQKEEELQVKEKLQEELRWRRTFLHAVDVVLDPDTAHPDLFLSEDRRSVRRCPFRHLGESVPDNPERFDSQPCVLGRESFASGKHYWEVEVENVIEWTVGVCRDSVERKGEVLLIPQNGFWTLEMHKGQYRAVSSPDRILPLKESLCRVGVFLDYEAGDVSFYNMRDRSHIYTCPRSAFSVPVRPFFRLGCEDSPIFICPALTGANGVTVPEEGLTLHRVGTHQSL</sequence>
<organism>
    <name type="scientific">Homo sapiens</name>
    <name type="common">Human</name>
    <dbReference type="NCBI Taxonomy" id="9606"/>
    <lineage>
        <taxon>Eukaryota</taxon>
        <taxon>Metazoa</taxon>
        <taxon>Chordata</taxon>
        <taxon>Craniata</taxon>
        <taxon>Vertebrata</taxon>
        <taxon>Euteleostomi</taxon>
        <taxon>Mammalia</taxon>
        <taxon>Eutheria</taxon>
        <taxon>Euarchontoglires</taxon>
        <taxon>Primates</taxon>
        <taxon>Haplorrhini</taxon>
        <taxon>Catarrhini</taxon>
        <taxon>Hominidae</taxon>
        <taxon>Homo</taxon>
    </lineage>
</organism>
<feature type="signal peptide" evidence="2">
    <location>
        <begin position="1"/>
        <end position="28"/>
    </location>
</feature>
<feature type="chain" id="PRO_0000014529" description="Butyrophilin subfamily 2 member A1">
    <location>
        <begin position="29"/>
        <end position="527"/>
    </location>
</feature>
<feature type="topological domain" description="Extracellular" evidence="2">
    <location>
        <begin position="29"/>
        <end position="248"/>
    </location>
</feature>
<feature type="transmembrane region" description="Helical" evidence="2">
    <location>
        <begin position="249"/>
        <end position="269"/>
    </location>
</feature>
<feature type="topological domain" description="Cytoplasmic" evidence="2">
    <location>
        <begin position="270"/>
        <end position="527"/>
    </location>
</feature>
<feature type="domain" description="Ig-like V-type">
    <location>
        <begin position="29"/>
        <end position="141"/>
    </location>
</feature>
<feature type="domain" description="B30.2/SPRY" evidence="4">
    <location>
        <begin position="310"/>
        <end position="506"/>
    </location>
</feature>
<feature type="glycosylation site" description="N-linked (GlcNAc...) asparagine" evidence="2">
    <location>
        <position position="46"/>
    </location>
</feature>
<feature type="glycosylation site" description="N-linked (GlcNAc...) asparagine" evidence="5">
    <location>
        <position position="114"/>
    </location>
</feature>
<feature type="glycosylation site" description="N-linked (GlcNAc...) asparagine" evidence="5">
    <location>
        <position position="120"/>
    </location>
</feature>
<feature type="disulfide bond" evidence="3">
    <location>
        <begin position="51"/>
        <end position="125"/>
    </location>
</feature>
<feature type="splice variant" id="VSP_012708" description="In isoform 3." evidence="9">
    <location>
        <begin position="1"/>
        <end position="152"/>
    </location>
</feature>
<feature type="splice variant" id="VSP_044249" description="In isoform 5." evidence="7">
    <location>
        <begin position="1"/>
        <end position="61"/>
    </location>
</feature>
<feature type="splice variant" id="VSP_035843" description="In isoform 2." evidence="10">
    <original>CAVALPIIVVILMIPI</original>
    <variation>L</variation>
    <location>
        <begin position="247"/>
        <end position="262"/>
    </location>
</feature>
<feature type="splice variant" id="VSP_043165" description="In isoform 4." evidence="8">
    <original>VDVVLDP</original>
    <variation>ELQFFSN</variation>
    <location>
        <begin position="328"/>
        <end position="334"/>
    </location>
</feature>
<feature type="splice variant" id="VSP_045005" description="In isoform 6." evidence="11">
    <original>VDV</original>
    <variation>GPV</variation>
    <location>
        <begin position="328"/>
        <end position="330"/>
    </location>
</feature>
<feature type="splice variant" id="VSP_045006" description="In isoform 6." evidence="11">
    <location>
        <begin position="331"/>
        <end position="527"/>
    </location>
</feature>
<feature type="splice variant" id="VSP_043166" description="In isoform 4." evidence="8">
    <location>
        <begin position="335"/>
        <end position="527"/>
    </location>
</feature>
<feature type="splice variant" id="VSP_035844" description="In isoform 2." evidence="10">
    <original>VPVRPFFRLGCEDSPIFICPALTGANGVTVPEEGLTLHRVGTHQSL</original>
    <variation>GPDTSQSGDPPEPIESIPWSHSHVDKPWSFQQPPHNTHLPAASFTPTTDLSPSFLLLTRLCF</variation>
    <location>
        <begin position="482"/>
        <end position="527"/>
    </location>
</feature>
<feature type="sequence variant" id="VAR_049825" description="In dbSNP:rs3734539.">
    <original>R</original>
    <variation>C</variation>
    <location>
        <position position="124"/>
    </location>
</feature>
<feature type="sequence variant" id="VAR_061303" description="In dbSNP:rs13195402.">
    <original>W</original>
    <variation>C</variation>
    <location>
        <position position="178"/>
    </location>
</feature>
<feature type="sequence variant" id="VAR_061304" description="In dbSNP:rs13195401.">
    <original>W</original>
    <variation>L</variation>
    <location>
        <position position="178"/>
    </location>
</feature>
<feature type="sequence variant" id="VAR_049826" description="In dbSNP:rs13195509.">
    <original>V</original>
    <variation>M</variation>
    <location>
        <position position="207"/>
    </location>
</feature>
<feature type="sequence variant" id="VAR_049827" description="In dbSNP:rs3734542.">
    <original>R</original>
    <variation>Q</variation>
    <location>
        <position position="378"/>
    </location>
</feature>
<feature type="sequence variant" id="VAR_049828" description="In dbSNP:rs3734543.">
    <original>G</original>
    <variation>A</variation>
    <location>
        <position position="451"/>
    </location>
</feature>
<feature type="sequence conflict" description="In Ref. 1; AAC02650/AAC02653." evidence="12" ref="1">
    <original>Q</original>
    <variation>H</variation>
    <location>
        <position position="29"/>
    </location>
</feature>
<feature type="sequence conflict" description="In Ref. 1; AAC02650/AAC02653." evidence="12" ref="1">
    <original>E</original>
    <variation>G</variation>
    <location>
        <position position="119"/>
    </location>
</feature>
<feature type="sequence conflict" description="In Ref. 1; AAC02650/AAC02653." evidence="12" ref="1">
    <original>G</original>
    <variation>ER</variation>
    <location>
        <position position="144"/>
    </location>
</feature>
<feature type="sequence conflict" description="In Ref. 3; CAD97989." evidence="12" ref="3">
    <original>I</original>
    <variation>V</variation>
    <location>
        <position position="208"/>
    </location>
</feature>
<feature type="strand" evidence="13">
    <location>
        <begin position="39"/>
        <end position="42"/>
    </location>
</feature>
<feature type="strand" evidence="13">
    <location>
        <begin position="47"/>
        <end position="55"/>
    </location>
</feature>
<feature type="strand" evidence="13">
    <location>
        <begin position="62"/>
        <end position="69"/>
    </location>
</feature>
<feature type="strand" evidence="13">
    <location>
        <begin position="71"/>
        <end position="79"/>
    </location>
</feature>
<feature type="helix" evidence="13">
    <location>
        <begin position="85"/>
        <end position="87"/>
    </location>
</feature>
<feature type="helix" evidence="13">
    <location>
        <begin position="90"/>
        <end position="92"/>
    </location>
</feature>
<feature type="strand" evidence="13">
    <location>
        <begin position="95"/>
        <end position="102"/>
    </location>
</feature>
<feature type="turn" evidence="13">
    <location>
        <begin position="103"/>
        <end position="106"/>
    </location>
</feature>
<feature type="strand" evidence="13">
    <location>
        <begin position="107"/>
        <end position="112"/>
    </location>
</feature>
<feature type="helix" evidence="13">
    <location>
        <begin position="117"/>
        <end position="119"/>
    </location>
</feature>
<feature type="strand" evidence="13">
    <location>
        <begin position="121"/>
        <end position="131"/>
    </location>
</feature>
<feature type="strand" evidence="13">
    <location>
        <begin position="133"/>
        <end position="144"/>
    </location>
</feature>
<feature type="strand" evidence="13">
    <location>
        <begin position="150"/>
        <end position="157"/>
    </location>
</feature>
<feature type="strand" evidence="13">
    <location>
        <begin position="160"/>
        <end position="172"/>
    </location>
</feature>
<feature type="strand" evidence="13">
    <location>
        <begin position="175"/>
        <end position="179"/>
    </location>
</feature>
<feature type="strand" evidence="13">
    <location>
        <begin position="189"/>
        <end position="195"/>
    </location>
</feature>
<feature type="strand" evidence="13">
    <location>
        <begin position="201"/>
        <end position="209"/>
    </location>
</feature>
<feature type="strand" evidence="13">
    <location>
        <begin position="216"/>
        <end position="223"/>
    </location>
</feature>
<feature type="turn" evidence="13">
    <location>
        <begin position="224"/>
        <end position="227"/>
    </location>
</feature>
<feature type="strand" evidence="13">
    <location>
        <begin position="228"/>
        <end position="235"/>
    </location>
</feature>
<feature type="helix" evidence="13">
    <location>
        <begin position="238"/>
        <end position="240"/>
    </location>
</feature>
<feature type="strand" evidence="14">
    <location>
        <begin position="324"/>
        <end position="327"/>
    </location>
</feature>
<feature type="helix" evidence="14">
    <location>
        <begin position="334"/>
        <end position="336"/>
    </location>
</feature>
<feature type="strand" evidence="14">
    <location>
        <begin position="341"/>
        <end position="343"/>
    </location>
</feature>
<feature type="strand" evidence="14">
    <location>
        <begin position="347"/>
        <end position="352"/>
    </location>
</feature>
<feature type="turn" evidence="14">
    <location>
        <begin position="354"/>
        <end position="359"/>
    </location>
</feature>
<feature type="strand" evidence="14">
    <location>
        <begin position="374"/>
        <end position="378"/>
    </location>
</feature>
<feature type="strand" evidence="14">
    <location>
        <begin position="381"/>
        <end position="391"/>
    </location>
</feature>
<feature type="strand" evidence="14">
    <location>
        <begin position="397"/>
        <end position="404"/>
    </location>
</feature>
<feature type="strand" evidence="14">
    <location>
        <begin position="409"/>
        <end position="411"/>
    </location>
</feature>
<feature type="helix" evidence="14">
    <location>
        <begin position="417"/>
        <end position="419"/>
    </location>
</feature>
<feature type="strand" evidence="14">
    <location>
        <begin position="421"/>
        <end position="427"/>
    </location>
</feature>
<feature type="strand" evidence="14">
    <location>
        <begin position="430"/>
        <end position="433"/>
    </location>
</feature>
<feature type="strand" evidence="14">
    <location>
        <begin position="448"/>
        <end position="455"/>
    </location>
</feature>
<feature type="turn" evidence="14">
    <location>
        <begin position="456"/>
        <end position="459"/>
    </location>
</feature>
<feature type="strand" evidence="14">
    <location>
        <begin position="460"/>
        <end position="465"/>
    </location>
</feature>
<feature type="turn" evidence="14">
    <location>
        <begin position="466"/>
        <end position="469"/>
    </location>
</feature>
<feature type="strand" evidence="14">
    <location>
        <begin position="470"/>
        <end position="474"/>
    </location>
</feature>
<feature type="strand" evidence="14">
    <location>
        <begin position="484"/>
        <end position="490"/>
    </location>
</feature>
<feature type="strand" evidence="14">
    <location>
        <begin position="492"/>
        <end position="494"/>
    </location>
</feature>
<feature type="strand" evidence="14">
    <location>
        <begin position="497"/>
        <end position="499"/>
    </location>
</feature>
<feature type="turn" evidence="14">
    <location>
        <begin position="505"/>
        <end position="508"/>
    </location>
</feature>
<feature type="strand" evidence="14">
    <location>
        <begin position="516"/>
        <end position="518"/>
    </location>
</feature>
<accession>Q7KYR7</accession>
<accession>B4DLP9</accession>
<accession>E9PGR4</accession>
<accession>O00475</accession>
<accession>P78408</accession>
<accession>Q59EN4</accession>
<accession>Q7KYQ7</accession>
<accession>Q7Z386</accession>
<accession>Q96AV7</accession>
<accession>Q9NU62</accession>
<name>BT2A1_HUMAN</name>
<keyword id="KW-0002">3D-structure</keyword>
<keyword id="KW-0025">Alternative splicing</keyword>
<keyword id="KW-0175">Coiled coil</keyword>
<keyword id="KW-1015">Disulfide bond</keyword>
<keyword id="KW-0325">Glycoprotein</keyword>
<keyword id="KW-0393">Immunoglobulin domain</keyword>
<keyword id="KW-0472">Membrane</keyword>
<keyword id="KW-1267">Proteomics identification</keyword>
<keyword id="KW-1185">Reference proteome</keyword>
<keyword id="KW-0732">Signal</keyword>
<keyword id="KW-0812">Transmembrane</keyword>
<keyword id="KW-1133">Transmembrane helix</keyword>
<protein>
    <recommendedName>
        <fullName>Butyrophilin subfamily 2 member A1</fullName>
    </recommendedName>
</protein>
<gene>
    <name type="primary">BTN2A1</name>
    <name type="synonym">BT2.1</name>
    <name type="synonym">BTF1</name>
</gene>
<reference key="1">
    <citation type="journal article" date="1997" name="Immunogenetics">
        <title>Cloning, localization, and structure of new members of the butyrophilin gene family in the juxta-telomeric region of the major histocompatibility complex.</title>
        <authorList>
            <person name="Tazi-Ahnini R."/>
            <person name="Henry J."/>
            <person name="Offer C."/>
            <person name="Bouissou-Bouchouata C."/>
            <person name="Mather I.H."/>
            <person name="Pontarotti P."/>
        </authorList>
    </citation>
    <scope>NUCLEOTIDE SEQUENCE [GENOMIC DNA / MRNA] (ISOFORM 2)</scope>
</reference>
<reference key="2">
    <citation type="journal article" date="1997" name="Genome Res.">
        <title>A 1.1-Mb transcript map of the hereditary hemochromatosis locus.</title>
        <authorList>
            <person name="Ruddy D.A."/>
            <person name="Kronmal G.S."/>
            <person name="Lee V.K."/>
            <person name="Mintier G.A."/>
            <person name="Quintana L."/>
            <person name="Domingo R. Jr."/>
            <person name="Meyer N.C."/>
            <person name="Irrinki A."/>
            <person name="McClelland E.E."/>
            <person name="Fullan A."/>
            <person name="Mapa F.A."/>
            <person name="Moore T."/>
            <person name="Thomas W."/>
            <person name="Loeb D.B."/>
            <person name="Harmon C."/>
            <person name="Tsuchihashi Z."/>
            <person name="Wolff R.K."/>
            <person name="Schatzman R.C."/>
            <person name="Feder J.N."/>
        </authorList>
    </citation>
    <scope>NUCLEOTIDE SEQUENCE [MRNA] (ISOFORM 1)</scope>
    <scope>TISSUE SPECIFICITY</scope>
</reference>
<reference key="3">
    <citation type="journal article" date="2007" name="BMC Genomics">
        <title>The full-ORF clone resource of the German cDNA consortium.</title>
        <authorList>
            <person name="Bechtel S."/>
            <person name="Rosenfelder H."/>
            <person name="Duda A."/>
            <person name="Schmidt C.P."/>
            <person name="Ernst U."/>
            <person name="Wellenreuther R."/>
            <person name="Mehrle A."/>
            <person name="Schuster C."/>
            <person name="Bahr A."/>
            <person name="Bloecker H."/>
            <person name="Heubner D."/>
            <person name="Hoerlein A."/>
            <person name="Michel G."/>
            <person name="Wedler H."/>
            <person name="Koehrer K."/>
            <person name="Ottenwaelder B."/>
            <person name="Poustka A."/>
            <person name="Wiemann S."/>
            <person name="Schupp I."/>
        </authorList>
    </citation>
    <scope>NUCLEOTIDE SEQUENCE [LARGE SCALE MRNA] (ISOFORM 3)</scope>
    <source>
        <tissue>Colon endothelium</tissue>
    </source>
</reference>
<reference key="4">
    <citation type="journal article" date="2004" name="Nat. Genet.">
        <title>Complete sequencing and characterization of 21,243 full-length human cDNAs.</title>
        <authorList>
            <person name="Ota T."/>
            <person name="Suzuki Y."/>
            <person name="Nishikawa T."/>
            <person name="Otsuki T."/>
            <person name="Sugiyama T."/>
            <person name="Irie R."/>
            <person name="Wakamatsu A."/>
            <person name="Hayashi K."/>
            <person name="Sato H."/>
            <person name="Nagai K."/>
            <person name="Kimura K."/>
            <person name="Makita H."/>
            <person name="Sekine M."/>
            <person name="Obayashi M."/>
            <person name="Nishi T."/>
            <person name="Shibahara T."/>
            <person name="Tanaka T."/>
            <person name="Ishii S."/>
            <person name="Yamamoto J."/>
            <person name="Saito K."/>
            <person name="Kawai Y."/>
            <person name="Isono Y."/>
            <person name="Nakamura Y."/>
            <person name="Nagahari K."/>
            <person name="Murakami K."/>
            <person name="Yasuda T."/>
            <person name="Iwayanagi T."/>
            <person name="Wagatsuma M."/>
            <person name="Shiratori A."/>
            <person name="Sudo H."/>
            <person name="Hosoiri T."/>
            <person name="Kaku Y."/>
            <person name="Kodaira H."/>
            <person name="Kondo H."/>
            <person name="Sugawara M."/>
            <person name="Takahashi M."/>
            <person name="Kanda K."/>
            <person name="Yokoi T."/>
            <person name="Furuya T."/>
            <person name="Kikkawa E."/>
            <person name="Omura Y."/>
            <person name="Abe K."/>
            <person name="Kamihara K."/>
            <person name="Katsuta N."/>
            <person name="Sato K."/>
            <person name="Tanikawa M."/>
            <person name="Yamazaki M."/>
            <person name="Ninomiya K."/>
            <person name="Ishibashi T."/>
            <person name="Yamashita H."/>
            <person name="Murakawa K."/>
            <person name="Fujimori K."/>
            <person name="Tanai H."/>
            <person name="Kimata M."/>
            <person name="Watanabe M."/>
            <person name="Hiraoka S."/>
            <person name="Chiba Y."/>
            <person name="Ishida S."/>
            <person name="Ono Y."/>
            <person name="Takiguchi S."/>
            <person name="Watanabe S."/>
            <person name="Yosida M."/>
            <person name="Hotuta T."/>
            <person name="Kusano J."/>
            <person name="Kanehori K."/>
            <person name="Takahashi-Fujii A."/>
            <person name="Hara H."/>
            <person name="Tanase T.-O."/>
            <person name="Nomura Y."/>
            <person name="Togiya S."/>
            <person name="Komai F."/>
            <person name="Hara R."/>
            <person name="Takeuchi K."/>
            <person name="Arita M."/>
            <person name="Imose N."/>
            <person name="Musashino K."/>
            <person name="Yuuki H."/>
            <person name="Oshima A."/>
            <person name="Sasaki N."/>
            <person name="Aotsuka S."/>
            <person name="Yoshikawa Y."/>
            <person name="Matsunawa H."/>
            <person name="Ichihara T."/>
            <person name="Shiohata N."/>
            <person name="Sano S."/>
            <person name="Moriya S."/>
            <person name="Momiyama H."/>
            <person name="Satoh N."/>
            <person name="Takami S."/>
            <person name="Terashima Y."/>
            <person name="Suzuki O."/>
            <person name="Nakagawa S."/>
            <person name="Senoh A."/>
            <person name="Mizoguchi H."/>
            <person name="Goto Y."/>
            <person name="Shimizu F."/>
            <person name="Wakebe H."/>
            <person name="Hishigaki H."/>
            <person name="Watanabe T."/>
            <person name="Sugiyama A."/>
            <person name="Takemoto M."/>
            <person name="Kawakami B."/>
            <person name="Yamazaki M."/>
            <person name="Watanabe K."/>
            <person name="Kumagai A."/>
            <person name="Itakura S."/>
            <person name="Fukuzumi Y."/>
            <person name="Fujimori Y."/>
            <person name="Komiyama M."/>
            <person name="Tashiro H."/>
            <person name="Tanigami A."/>
            <person name="Fujiwara T."/>
            <person name="Ono T."/>
            <person name="Yamada K."/>
            <person name="Fujii Y."/>
            <person name="Ozaki K."/>
            <person name="Hirao M."/>
            <person name="Ohmori Y."/>
            <person name="Kawabata A."/>
            <person name="Hikiji T."/>
            <person name="Kobatake N."/>
            <person name="Inagaki H."/>
            <person name="Ikema Y."/>
            <person name="Okamoto S."/>
            <person name="Okitani R."/>
            <person name="Kawakami T."/>
            <person name="Noguchi S."/>
            <person name="Itoh T."/>
            <person name="Shigeta K."/>
            <person name="Senba T."/>
            <person name="Matsumura K."/>
            <person name="Nakajima Y."/>
            <person name="Mizuno T."/>
            <person name="Morinaga M."/>
            <person name="Sasaki M."/>
            <person name="Togashi T."/>
            <person name="Oyama M."/>
            <person name="Hata H."/>
            <person name="Watanabe M."/>
            <person name="Komatsu T."/>
            <person name="Mizushima-Sugano J."/>
            <person name="Satoh T."/>
            <person name="Shirai Y."/>
            <person name="Takahashi Y."/>
            <person name="Nakagawa K."/>
            <person name="Okumura K."/>
            <person name="Nagase T."/>
            <person name="Nomura N."/>
            <person name="Kikuchi H."/>
            <person name="Masuho Y."/>
            <person name="Yamashita R."/>
            <person name="Nakai K."/>
            <person name="Yada T."/>
            <person name="Nakamura Y."/>
            <person name="Ohara O."/>
            <person name="Isogai T."/>
            <person name="Sugano S."/>
        </authorList>
    </citation>
    <scope>NUCLEOTIDE SEQUENCE [LARGE SCALE MRNA] (ISOFORM 5)</scope>
    <source>
        <tissue>Placenta</tissue>
    </source>
</reference>
<reference key="5">
    <citation type="submission" date="2005-03" db="EMBL/GenBank/DDBJ databases">
        <title>Homo sapiens protein coding cDNA.</title>
        <authorList>
            <person name="Totoki Y."/>
            <person name="Toyoda A."/>
            <person name="Takeda T."/>
            <person name="Sakaki Y."/>
            <person name="Tanaka A."/>
            <person name="Yokoyama S."/>
            <person name="Ohara O."/>
            <person name="Nagase T."/>
            <person name="Kikuno R.F."/>
        </authorList>
    </citation>
    <scope>NUCLEOTIDE SEQUENCE [LARGE SCALE MRNA] (ISOFORM 6)</scope>
    <source>
        <tissue>Brain</tissue>
    </source>
</reference>
<reference key="6">
    <citation type="journal article" date="2003" name="Nature">
        <title>The DNA sequence and analysis of human chromosome 6.</title>
        <authorList>
            <person name="Mungall A.J."/>
            <person name="Palmer S.A."/>
            <person name="Sims S.K."/>
            <person name="Edwards C.A."/>
            <person name="Ashurst J.L."/>
            <person name="Wilming L."/>
            <person name="Jones M.C."/>
            <person name="Horton R."/>
            <person name="Hunt S.E."/>
            <person name="Scott C.E."/>
            <person name="Gilbert J.G.R."/>
            <person name="Clamp M.E."/>
            <person name="Bethel G."/>
            <person name="Milne S."/>
            <person name="Ainscough R."/>
            <person name="Almeida J.P."/>
            <person name="Ambrose K.D."/>
            <person name="Andrews T.D."/>
            <person name="Ashwell R.I.S."/>
            <person name="Babbage A.K."/>
            <person name="Bagguley C.L."/>
            <person name="Bailey J."/>
            <person name="Banerjee R."/>
            <person name="Barker D.J."/>
            <person name="Barlow K.F."/>
            <person name="Bates K."/>
            <person name="Beare D.M."/>
            <person name="Beasley H."/>
            <person name="Beasley O."/>
            <person name="Bird C.P."/>
            <person name="Blakey S.E."/>
            <person name="Bray-Allen S."/>
            <person name="Brook J."/>
            <person name="Brown A.J."/>
            <person name="Brown J.Y."/>
            <person name="Burford D.C."/>
            <person name="Burrill W."/>
            <person name="Burton J."/>
            <person name="Carder C."/>
            <person name="Carter N.P."/>
            <person name="Chapman J.C."/>
            <person name="Clark S.Y."/>
            <person name="Clark G."/>
            <person name="Clee C.M."/>
            <person name="Clegg S."/>
            <person name="Cobley V."/>
            <person name="Collier R.E."/>
            <person name="Collins J.E."/>
            <person name="Colman L.K."/>
            <person name="Corby N.R."/>
            <person name="Coville G.J."/>
            <person name="Culley K.M."/>
            <person name="Dhami P."/>
            <person name="Davies J."/>
            <person name="Dunn M."/>
            <person name="Earthrowl M.E."/>
            <person name="Ellington A.E."/>
            <person name="Evans K.A."/>
            <person name="Faulkner L."/>
            <person name="Francis M.D."/>
            <person name="Frankish A."/>
            <person name="Frankland J."/>
            <person name="French L."/>
            <person name="Garner P."/>
            <person name="Garnett J."/>
            <person name="Ghori M.J."/>
            <person name="Gilby L.M."/>
            <person name="Gillson C.J."/>
            <person name="Glithero R.J."/>
            <person name="Grafham D.V."/>
            <person name="Grant M."/>
            <person name="Gribble S."/>
            <person name="Griffiths C."/>
            <person name="Griffiths M.N.D."/>
            <person name="Hall R."/>
            <person name="Halls K.S."/>
            <person name="Hammond S."/>
            <person name="Harley J.L."/>
            <person name="Hart E.A."/>
            <person name="Heath P.D."/>
            <person name="Heathcott R."/>
            <person name="Holmes S.J."/>
            <person name="Howden P.J."/>
            <person name="Howe K.L."/>
            <person name="Howell G.R."/>
            <person name="Huckle E."/>
            <person name="Humphray S.J."/>
            <person name="Humphries M.D."/>
            <person name="Hunt A.R."/>
            <person name="Johnson C.M."/>
            <person name="Joy A.A."/>
            <person name="Kay M."/>
            <person name="Keenan S.J."/>
            <person name="Kimberley A.M."/>
            <person name="King A."/>
            <person name="Laird G.K."/>
            <person name="Langford C."/>
            <person name="Lawlor S."/>
            <person name="Leongamornlert D.A."/>
            <person name="Leversha M."/>
            <person name="Lloyd C.R."/>
            <person name="Lloyd D.M."/>
            <person name="Loveland J.E."/>
            <person name="Lovell J."/>
            <person name="Martin S."/>
            <person name="Mashreghi-Mohammadi M."/>
            <person name="Maslen G.L."/>
            <person name="Matthews L."/>
            <person name="McCann O.T."/>
            <person name="McLaren S.J."/>
            <person name="McLay K."/>
            <person name="McMurray A."/>
            <person name="Moore M.J.F."/>
            <person name="Mullikin J.C."/>
            <person name="Niblett D."/>
            <person name="Nickerson T."/>
            <person name="Novik K.L."/>
            <person name="Oliver K."/>
            <person name="Overton-Larty E.K."/>
            <person name="Parker A."/>
            <person name="Patel R."/>
            <person name="Pearce A.V."/>
            <person name="Peck A.I."/>
            <person name="Phillimore B.J.C.T."/>
            <person name="Phillips S."/>
            <person name="Plumb R.W."/>
            <person name="Porter K.M."/>
            <person name="Ramsey Y."/>
            <person name="Ranby S.A."/>
            <person name="Rice C.M."/>
            <person name="Ross M.T."/>
            <person name="Searle S.M."/>
            <person name="Sehra H.K."/>
            <person name="Sheridan E."/>
            <person name="Skuce C.D."/>
            <person name="Smith S."/>
            <person name="Smith M."/>
            <person name="Spraggon L."/>
            <person name="Squares S.L."/>
            <person name="Steward C.A."/>
            <person name="Sycamore N."/>
            <person name="Tamlyn-Hall G."/>
            <person name="Tester J."/>
            <person name="Theaker A.J."/>
            <person name="Thomas D.W."/>
            <person name="Thorpe A."/>
            <person name="Tracey A."/>
            <person name="Tromans A."/>
            <person name="Tubby B."/>
            <person name="Wall M."/>
            <person name="Wallis J.M."/>
            <person name="West A.P."/>
            <person name="White S.S."/>
            <person name="Whitehead S.L."/>
            <person name="Whittaker H."/>
            <person name="Wild A."/>
            <person name="Willey D.J."/>
            <person name="Wilmer T.E."/>
            <person name="Wood J.M."/>
            <person name="Wray P.W."/>
            <person name="Wyatt J.C."/>
            <person name="Young L."/>
            <person name="Younger R.M."/>
            <person name="Bentley D.R."/>
            <person name="Coulson A."/>
            <person name="Durbin R.M."/>
            <person name="Hubbard T."/>
            <person name="Sulston J.E."/>
            <person name="Dunham I."/>
            <person name="Rogers J."/>
            <person name="Beck S."/>
        </authorList>
    </citation>
    <scope>NUCLEOTIDE SEQUENCE [LARGE SCALE GENOMIC DNA]</scope>
</reference>
<reference key="7">
    <citation type="journal article" date="2004" name="Genome Res.">
        <title>The status, quality, and expansion of the NIH full-length cDNA project: the Mammalian Gene Collection (MGC).</title>
        <authorList>
            <consortium name="The MGC Project Team"/>
        </authorList>
    </citation>
    <scope>NUCLEOTIDE SEQUENCE [LARGE SCALE MRNA] (ISOFORM 4)</scope>
    <source>
        <tissue>Lymph</tissue>
    </source>
</reference>
<reference key="8">
    <citation type="journal article" date="2009" name="Nat. Biotechnol.">
        <title>Mass-spectrometric identification and relative quantification of N-linked cell surface glycoproteins.</title>
        <authorList>
            <person name="Wollscheid B."/>
            <person name="Bausch-Fluck D."/>
            <person name="Henderson C."/>
            <person name="O'Brien R."/>
            <person name="Bibel M."/>
            <person name="Schiess R."/>
            <person name="Aebersold R."/>
            <person name="Watts J.D."/>
        </authorList>
    </citation>
    <scope>GLYCOSYLATION [LARGE SCALE ANALYSIS] AT ASN-114 AND ASN-120</scope>
    <source>
        <tissue>Leukemic T-cell</tissue>
    </source>
</reference>
<proteinExistence type="evidence at protein level"/>
<dbReference type="EMBL" id="U90142">
    <property type="protein sequence ID" value="AAC02650.1"/>
    <property type="molecule type" value="mRNA"/>
</dbReference>
<dbReference type="EMBL" id="U97496">
    <property type="protein sequence ID" value="AAC02653.1"/>
    <property type="molecule type" value="Genomic_DNA"/>
</dbReference>
<dbReference type="EMBL" id="U97495">
    <property type="protein sequence ID" value="AAC02653.1"/>
    <property type="status" value="JOINED"/>
    <property type="molecule type" value="Genomic_DNA"/>
</dbReference>
<dbReference type="EMBL" id="U97497">
    <property type="protein sequence ID" value="AAC02654.1"/>
    <property type="molecule type" value="Genomic_DNA"/>
</dbReference>
<dbReference type="EMBL" id="U90543">
    <property type="protein sequence ID" value="AAB53421.1"/>
    <property type="molecule type" value="mRNA"/>
</dbReference>
<dbReference type="EMBL" id="BX538050">
    <property type="protein sequence ID" value="CAD97989.1"/>
    <property type="molecule type" value="mRNA"/>
</dbReference>
<dbReference type="EMBL" id="AK297098">
    <property type="protein sequence ID" value="BAG59611.1"/>
    <property type="molecule type" value="mRNA"/>
</dbReference>
<dbReference type="EMBL" id="AB209777">
    <property type="protein sequence ID" value="BAD93014.1"/>
    <property type="status" value="ALT_INIT"/>
    <property type="molecule type" value="mRNA"/>
</dbReference>
<dbReference type="EMBL" id="AL050330">
    <property type="status" value="NOT_ANNOTATED_CDS"/>
    <property type="molecule type" value="Genomic_DNA"/>
</dbReference>
<dbReference type="EMBL" id="AL121936">
    <property type="status" value="NOT_ANNOTATED_CDS"/>
    <property type="molecule type" value="Genomic_DNA"/>
</dbReference>
<dbReference type="EMBL" id="BC016661">
    <property type="protein sequence ID" value="AAH16661.1"/>
    <property type="molecule type" value="mRNA"/>
</dbReference>
<dbReference type="CCDS" id="CCDS4613.1">
    <molecule id="Q7KYR7-2"/>
</dbReference>
<dbReference type="CCDS" id="CCDS47390.1">
    <molecule id="Q7KYR7-4"/>
</dbReference>
<dbReference type="CCDS" id="CCDS56404.1">
    <molecule id="Q7KYR7-6"/>
</dbReference>
<dbReference type="CCDS" id="CCDS56405.1">
    <molecule id="Q7KYR7-5"/>
</dbReference>
<dbReference type="RefSeq" id="NP_001184162.1">
    <molecule id="Q7KYR7-5"/>
    <property type="nucleotide sequence ID" value="NM_001197233.3"/>
</dbReference>
<dbReference type="RefSeq" id="NP_001184163.1">
    <molecule id="Q7KYR7-6"/>
    <property type="nucleotide sequence ID" value="NM_001197234.3"/>
</dbReference>
<dbReference type="RefSeq" id="NP_008980.1">
    <molecule id="Q7KYR7-2"/>
    <property type="nucleotide sequence ID" value="NM_007049.5"/>
</dbReference>
<dbReference type="RefSeq" id="NP_510961.1">
    <molecule id="Q7KYR7-4"/>
    <property type="nucleotide sequence ID" value="NM_078476.4"/>
</dbReference>
<dbReference type="PDB" id="8DFW">
    <property type="method" value="X-ray"/>
    <property type="resolution" value="2.10 A"/>
    <property type="chains" value="A/B=29-245"/>
</dbReference>
<dbReference type="PDB" id="8DFX">
    <property type="method" value="X-ray"/>
    <property type="resolution" value="5.55 A"/>
    <property type="chains" value="A=29-245"/>
</dbReference>
<dbReference type="PDB" id="8DFY">
    <property type="method" value="X-ray"/>
    <property type="resolution" value="3.55 A"/>
    <property type="chains" value="A/B/C/D/E=29-245"/>
</dbReference>
<dbReference type="PDB" id="8JYC">
    <property type="method" value="X-ray"/>
    <property type="resolution" value="2.29 A"/>
    <property type="chains" value="A/B=316-527"/>
</dbReference>
<dbReference type="PDB" id="8JYE">
    <property type="method" value="X-ray"/>
    <property type="resolution" value="2.18 A"/>
    <property type="chains" value="A/B=316-527"/>
</dbReference>
<dbReference type="PDB" id="8VC7">
    <property type="method" value="X-ray"/>
    <property type="resolution" value="2.76 A"/>
    <property type="chains" value="C/E=29-247"/>
</dbReference>
<dbReference type="PDBsum" id="8DFW"/>
<dbReference type="PDBsum" id="8DFX"/>
<dbReference type="PDBsum" id="8DFY"/>
<dbReference type="PDBsum" id="8JYC"/>
<dbReference type="PDBsum" id="8JYE"/>
<dbReference type="PDBsum" id="8VC7"/>
<dbReference type="SMR" id="Q7KYR7"/>
<dbReference type="BioGRID" id="116295">
    <property type="interactions" value="66"/>
</dbReference>
<dbReference type="FunCoup" id="Q7KYR7">
    <property type="interactions" value="886"/>
</dbReference>
<dbReference type="IntAct" id="Q7KYR7">
    <property type="interactions" value="51"/>
</dbReference>
<dbReference type="STRING" id="9606.ENSP00000312158"/>
<dbReference type="GlyCosmos" id="Q7KYR7">
    <property type="glycosylation" value="3 sites, No reported glycans"/>
</dbReference>
<dbReference type="GlyGen" id="Q7KYR7">
    <property type="glycosylation" value="7 sites, 3 N-linked glycans (4 sites), 1 O-linked glycan (1 site)"/>
</dbReference>
<dbReference type="iPTMnet" id="Q7KYR7"/>
<dbReference type="PhosphoSitePlus" id="Q7KYR7"/>
<dbReference type="SwissPalm" id="Q7KYR7"/>
<dbReference type="BioMuta" id="BTN2A1"/>
<dbReference type="DMDM" id="215274180"/>
<dbReference type="jPOST" id="Q7KYR7"/>
<dbReference type="MassIVE" id="Q7KYR7"/>
<dbReference type="PaxDb" id="9606-ENSP00000312158"/>
<dbReference type="PeptideAtlas" id="Q7KYR7"/>
<dbReference type="ProteomicsDB" id="20375"/>
<dbReference type="ProteomicsDB" id="4549"/>
<dbReference type="ProteomicsDB" id="68699">
    <molecule id="Q7KYR7-2"/>
</dbReference>
<dbReference type="ProteomicsDB" id="68700">
    <molecule id="Q7KYR7-1"/>
</dbReference>
<dbReference type="ProteomicsDB" id="68701">
    <molecule id="Q7KYR7-3"/>
</dbReference>
<dbReference type="ProteomicsDB" id="68702">
    <molecule id="Q7KYR7-4"/>
</dbReference>
<dbReference type="Pumba" id="Q7KYR7"/>
<dbReference type="Antibodypedia" id="11060">
    <property type="antibodies" value="240 antibodies from 27 providers"/>
</dbReference>
<dbReference type="DNASU" id="11120"/>
<dbReference type="Ensembl" id="ENST00000312541.10">
    <molecule id="Q7KYR7-2"/>
    <property type="protein sequence ID" value="ENSP00000312158.5"/>
    <property type="gene ID" value="ENSG00000112763.17"/>
</dbReference>
<dbReference type="Ensembl" id="ENST00000429381.5">
    <molecule id="Q7KYR7-4"/>
    <property type="protein sequence ID" value="ENSP00000416945.1"/>
    <property type="gene ID" value="ENSG00000112763.17"/>
</dbReference>
<dbReference type="Ensembl" id="ENST00000469185.5">
    <molecule id="Q7KYR7-6"/>
    <property type="protein sequence ID" value="ENSP00000419043.1"/>
    <property type="gene ID" value="ENSG00000112763.17"/>
</dbReference>
<dbReference type="Ensembl" id="ENST00000541522.5">
    <molecule id="Q7KYR7-5"/>
    <property type="protein sequence ID" value="ENSP00000443909.1"/>
    <property type="gene ID" value="ENSG00000112763.17"/>
</dbReference>
<dbReference type="Ensembl" id="ENST00000709935.1">
    <molecule id="Q7KYR7-2"/>
    <property type="protein sequence ID" value="ENSP00000517949.1"/>
    <property type="gene ID" value="ENSG00000292170.1"/>
</dbReference>
<dbReference type="Ensembl" id="ENST00000709937.1">
    <molecule id="Q7KYR7-4"/>
    <property type="protein sequence ID" value="ENSP00000517951.1"/>
    <property type="gene ID" value="ENSG00000292170.1"/>
</dbReference>
<dbReference type="Ensembl" id="ENST00000709938.1">
    <molecule id="Q7KYR7-6"/>
    <property type="protein sequence ID" value="ENSP00000517952.1"/>
    <property type="gene ID" value="ENSG00000292170.1"/>
</dbReference>
<dbReference type="Ensembl" id="ENST00000709940.1">
    <molecule id="Q7KYR7-5"/>
    <property type="protein sequence ID" value="ENSP00000517954.1"/>
    <property type="gene ID" value="ENSG00000292170.1"/>
</dbReference>
<dbReference type="GeneID" id="11120"/>
<dbReference type="KEGG" id="hsa:11120"/>
<dbReference type="MANE-Select" id="ENST00000312541.10">
    <property type="protein sequence ID" value="ENSP00000312158.5"/>
    <property type="RefSeq nucleotide sequence ID" value="NM_007049.5"/>
    <property type="RefSeq protein sequence ID" value="NP_008980.1"/>
</dbReference>
<dbReference type="UCSC" id="uc003nib.4">
    <molecule id="Q7KYR7-2"/>
    <property type="organism name" value="human"/>
</dbReference>
<dbReference type="AGR" id="HGNC:1136"/>
<dbReference type="CTD" id="11120"/>
<dbReference type="DisGeNET" id="11120"/>
<dbReference type="GeneCards" id="BTN2A1"/>
<dbReference type="HGNC" id="HGNC:1136">
    <property type="gene designation" value="BTN2A1"/>
</dbReference>
<dbReference type="HPA" id="ENSG00000112763">
    <property type="expression patterns" value="Low tissue specificity"/>
</dbReference>
<dbReference type="MIM" id="613590">
    <property type="type" value="gene"/>
</dbReference>
<dbReference type="neXtProt" id="NX_Q7KYR7"/>
<dbReference type="OpenTargets" id="ENSG00000112763"/>
<dbReference type="PharmGKB" id="PA25456"/>
<dbReference type="VEuPathDB" id="HostDB:ENSG00000112763"/>
<dbReference type="eggNOG" id="ENOG502QSRZ">
    <property type="taxonomic scope" value="Eukaryota"/>
</dbReference>
<dbReference type="GeneTree" id="ENSGT00940000163835"/>
<dbReference type="HOGENOM" id="CLU_013137_22_2_1"/>
<dbReference type="InParanoid" id="Q7KYR7"/>
<dbReference type="OMA" id="AETHHNH"/>
<dbReference type="OrthoDB" id="9986391at2759"/>
<dbReference type="PAN-GO" id="Q7KYR7">
    <property type="GO annotations" value="4 GO annotations based on evolutionary models"/>
</dbReference>
<dbReference type="PhylomeDB" id="Q7KYR7"/>
<dbReference type="TreeFam" id="TF331083"/>
<dbReference type="PathwayCommons" id="Q7KYR7"/>
<dbReference type="Reactome" id="R-HSA-8851680">
    <property type="pathway name" value="Butyrophilin (BTN) family interactions"/>
</dbReference>
<dbReference type="SignaLink" id="Q7KYR7"/>
<dbReference type="BioGRID-ORCS" id="11120">
    <property type="hits" value="8 hits in 1155 CRISPR screens"/>
</dbReference>
<dbReference type="ChiTaRS" id="BTN2A1">
    <property type="organism name" value="human"/>
</dbReference>
<dbReference type="GenomeRNAi" id="11120"/>
<dbReference type="Pharos" id="Q7KYR7">
    <property type="development level" value="Tbio"/>
</dbReference>
<dbReference type="PRO" id="PR:Q7KYR7"/>
<dbReference type="Proteomes" id="UP000005640">
    <property type="component" value="Chromosome 6"/>
</dbReference>
<dbReference type="RNAct" id="Q7KYR7">
    <property type="molecule type" value="protein"/>
</dbReference>
<dbReference type="Bgee" id="ENSG00000112763">
    <property type="expression patterns" value="Expressed in granulocyte and 203 other cell types or tissues"/>
</dbReference>
<dbReference type="ExpressionAtlas" id="Q7KYR7">
    <property type="expression patterns" value="baseline and differential"/>
</dbReference>
<dbReference type="GO" id="GO:0009897">
    <property type="term" value="C:external side of plasma membrane"/>
    <property type="evidence" value="ECO:0000318"/>
    <property type="project" value="GO_Central"/>
</dbReference>
<dbReference type="GO" id="GO:0005886">
    <property type="term" value="C:plasma membrane"/>
    <property type="evidence" value="ECO:0000304"/>
    <property type="project" value="Reactome"/>
</dbReference>
<dbReference type="GO" id="GO:0005102">
    <property type="term" value="F:signaling receptor binding"/>
    <property type="evidence" value="ECO:0000318"/>
    <property type="project" value="GO_Central"/>
</dbReference>
<dbReference type="GO" id="GO:0006629">
    <property type="term" value="P:lipid metabolic process"/>
    <property type="evidence" value="ECO:0000304"/>
    <property type="project" value="ProtInc"/>
</dbReference>
<dbReference type="GO" id="GO:0001817">
    <property type="term" value="P:regulation of cytokine production"/>
    <property type="evidence" value="ECO:0000318"/>
    <property type="project" value="GO_Central"/>
</dbReference>
<dbReference type="GO" id="GO:0050852">
    <property type="term" value="P:T cell receptor signaling pathway"/>
    <property type="evidence" value="ECO:0000318"/>
    <property type="project" value="GO_Central"/>
</dbReference>
<dbReference type="CDD" id="cd05713">
    <property type="entry name" value="IgV_MOG_like"/>
    <property type="match status" value="1"/>
</dbReference>
<dbReference type="CDD" id="cd15819">
    <property type="entry name" value="SPRY_PRY_BTN1_2"/>
    <property type="match status" value="1"/>
</dbReference>
<dbReference type="FunFam" id="2.60.120.920:FF:000004">
    <property type="entry name" value="Butyrophilin subfamily 1 member A1"/>
    <property type="match status" value="1"/>
</dbReference>
<dbReference type="FunFam" id="2.60.40.10:FF:000088">
    <property type="entry name" value="Butyrophilin subfamily 1 member A1"/>
    <property type="match status" value="1"/>
</dbReference>
<dbReference type="FunFam" id="2.60.40.10:FF:000208">
    <property type="entry name" value="Butyrophilin subfamily 1 member A1"/>
    <property type="match status" value="1"/>
</dbReference>
<dbReference type="Gene3D" id="2.60.120.920">
    <property type="match status" value="1"/>
</dbReference>
<dbReference type="Gene3D" id="2.60.40.10">
    <property type="entry name" value="Immunoglobulins"/>
    <property type="match status" value="2"/>
</dbReference>
<dbReference type="InterPro" id="IPR001870">
    <property type="entry name" value="B30.2/SPRY"/>
</dbReference>
<dbReference type="InterPro" id="IPR043136">
    <property type="entry name" value="B30.2/SPRY_sf"/>
</dbReference>
<dbReference type="InterPro" id="IPR053896">
    <property type="entry name" value="BTN3A2-like_Ig-C"/>
</dbReference>
<dbReference type="InterPro" id="IPR003879">
    <property type="entry name" value="Butyrophylin_SPRY"/>
</dbReference>
<dbReference type="InterPro" id="IPR013320">
    <property type="entry name" value="ConA-like_dom_sf"/>
</dbReference>
<dbReference type="InterPro" id="IPR007110">
    <property type="entry name" value="Ig-like_dom"/>
</dbReference>
<dbReference type="InterPro" id="IPR036179">
    <property type="entry name" value="Ig-like_dom_sf"/>
</dbReference>
<dbReference type="InterPro" id="IPR013783">
    <property type="entry name" value="Ig-like_fold"/>
</dbReference>
<dbReference type="InterPro" id="IPR003599">
    <property type="entry name" value="Ig_sub"/>
</dbReference>
<dbReference type="InterPro" id="IPR013106">
    <property type="entry name" value="Ig_V-set"/>
</dbReference>
<dbReference type="InterPro" id="IPR050504">
    <property type="entry name" value="IgSF_BTN/MOG"/>
</dbReference>
<dbReference type="InterPro" id="IPR006574">
    <property type="entry name" value="PRY"/>
</dbReference>
<dbReference type="InterPro" id="IPR037958">
    <property type="entry name" value="SPRY/PRY_BTN1/2"/>
</dbReference>
<dbReference type="InterPro" id="IPR003877">
    <property type="entry name" value="SPRY_dom"/>
</dbReference>
<dbReference type="PANTHER" id="PTHR24100">
    <property type="entry name" value="BUTYROPHILIN"/>
    <property type="match status" value="1"/>
</dbReference>
<dbReference type="PANTHER" id="PTHR24100:SF79">
    <property type="entry name" value="BUTYROPHILIN SUBFAMILY 2 MEMBER A1"/>
    <property type="match status" value="1"/>
</dbReference>
<dbReference type="Pfam" id="PF22705">
    <property type="entry name" value="C2-set_3"/>
    <property type="match status" value="1"/>
</dbReference>
<dbReference type="Pfam" id="PF13765">
    <property type="entry name" value="PRY"/>
    <property type="match status" value="1"/>
</dbReference>
<dbReference type="Pfam" id="PF00622">
    <property type="entry name" value="SPRY"/>
    <property type="match status" value="1"/>
</dbReference>
<dbReference type="Pfam" id="PF07686">
    <property type="entry name" value="V-set"/>
    <property type="match status" value="1"/>
</dbReference>
<dbReference type="PRINTS" id="PR01407">
    <property type="entry name" value="BUTYPHLNCDUF"/>
</dbReference>
<dbReference type="SMART" id="SM00409">
    <property type="entry name" value="IG"/>
    <property type="match status" value="1"/>
</dbReference>
<dbReference type="SMART" id="SM00406">
    <property type="entry name" value="IGv"/>
    <property type="match status" value="1"/>
</dbReference>
<dbReference type="SMART" id="SM00589">
    <property type="entry name" value="PRY"/>
    <property type="match status" value="1"/>
</dbReference>
<dbReference type="SMART" id="SM00449">
    <property type="entry name" value="SPRY"/>
    <property type="match status" value="1"/>
</dbReference>
<dbReference type="SUPFAM" id="SSF49899">
    <property type="entry name" value="Concanavalin A-like lectins/glucanases"/>
    <property type="match status" value="1"/>
</dbReference>
<dbReference type="SUPFAM" id="SSF48726">
    <property type="entry name" value="Immunoglobulin"/>
    <property type="match status" value="2"/>
</dbReference>
<dbReference type="PROSITE" id="PS50188">
    <property type="entry name" value="B302_SPRY"/>
    <property type="match status" value="1"/>
</dbReference>
<dbReference type="PROSITE" id="PS50835">
    <property type="entry name" value="IG_LIKE"/>
    <property type="match status" value="1"/>
</dbReference>